<protein>
    <recommendedName>
        <fullName evidence="1">Small ribosomal subunit protein uS14</fullName>
    </recommendedName>
    <alternativeName>
        <fullName evidence="3">30S ribosomal protein S14</fullName>
    </alternativeName>
</protein>
<comment type="function">
    <text evidence="1">Binds 16S rRNA, required for the assembly of 30S particles and may also be responsible for determining the conformation of the 16S rRNA at the A site.</text>
</comment>
<comment type="subunit">
    <text evidence="1">Part of the 30S ribosomal subunit. Contacts proteins S3 and S10.</text>
</comment>
<comment type="similarity">
    <text evidence="1">Belongs to the universal ribosomal protein uS14 family.</text>
</comment>
<organism>
    <name type="scientific">Rickettsia canadensis (strain McKiel)</name>
    <dbReference type="NCBI Taxonomy" id="293613"/>
    <lineage>
        <taxon>Bacteria</taxon>
        <taxon>Pseudomonadati</taxon>
        <taxon>Pseudomonadota</taxon>
        <taxon>Alphaproteobacteria</taxon>
        <taxon>Rickettsiales</taxon>
        <taxon>Rickettsiaceae</taxon>
        <taxon>Rickettsieae</taxon>
        <taxon>Rickettsia</taxon>
        <taxon>belli group</taxon>
    </lineage>
</organism>
<dbReference type="EMBL" id="CP000409">
    <property type="protein sequence ID" value="ABV73786.1"/>
    <property type="molecule type" value="Genomic_DNA"/>
</dbReference>
<dbReference type="RefSeq" id="WP_012148981.1">
    <property type="nucleotide sequence ID" value="NC_009879.1"/>
</dbReference>
<dbReference type="SMR" id="A8EZK3"/>
<dbReference type="STRING" id="293613.A1E_04305"/>
<dbReference type="KEGG" id="rcm:A1E_04305"/>
<dbReference type="eggNOG" id="COG0199">
    <property type="taxonomic scope" value="Bacteria"/>
</dbReference>
<dbReference type="HOGENOM" id="CLU_139869_0_1_5"/>
<dbReference type="Proteomes" id="UP000007056">
    <property type="component" value="Chromosome"/>
</dbReference>
<dbReference type="GO" id="GO:0005737">
    <property type="term" value="C:cytoplasm"/>
    <property type="evidence" value="ECO:0007669"/>
    <property type="project" value="UniProtKB-ARBA"/>
</dbReference>
<dbReference type="GO" id="GO:0015935">
    <property type="term" value="C:small ribosomal subunit"/>
    <property type="evidence" value="ECO:0007669"/>
    <property type="project" value="TreeGrafter"/>
</dbReference>
<dbReference type="GO" id="GO:0019843">
    <property type="term" value="F:rRNA binding"/>
    <property type="evidence" value="ECO:0007669"/>
    <property type="project" value="UniProtKB-UniRule"/>
</dbReference>
<dbReference type="GO" id="GO:0003735">
    <property type="term" value="F:structural constituent of ribosome"/>
    <property type="evidence" value="ECO:0007669"/>
    <property type="project" value="InterPro"/>
</dbReference>
<dbReference type="GO" id="GO:0006412">
    <property type="term" value="P:translation"/>
    <property type="evidence" value="ECO:0007669"/>
    <property type="project" value="UniProtKB-UniRule"/>
</dbReference>
<dbReference type="FunFam" id="1.10.287.1480:FF:000001">
    <property type="entry name" value="30S ribosomal protein S14"/>
    <property type="match status" value="1"/>
</dbReference>
<dbReference type="Gene3D" id="1.10.287.1480">
    <property type="match status" value="1"/>
</dbReference>
<dbReference type="HAMAP" id="MF_00537">
    <property type="entry name" value="Ribosomal_uS14_1"/>
    <property type="match status" value="1"/>
</dbReference>
<dbReference type="InterPro" id="IPR001209">
    <property type="entry name" value="Ribosomal_uS14"/>
</dbReference>
<dbReference type="InterPro" id="IPR023036">
    <property type="entry name" value="Ribosomal_uS14_bac/plastid"/>
</dbReference>
<dbReference type="InterPro" id="IPR018271">
    <property type="entry name" value="Ribosomal_uS14_CS"/>
</dbReference>
<dbReference type="NCBIfam" id="NF006477">
    <property type="entry name" value="PRK08881.1"/>
    <property type="match status" value="1"/>
</dbReference>
<dbReference type="PANTHER" id="PTHR19836">
    <property type="entry name" value="30S RIBOSOMAL PROTEIN S14"/>
    <property type="match status" value="1"/>
</dbReference>
<dbReference type="PANTHER" id="PTHR19836:SF19">
    <property type="entry name" value="SMALL RIBOSOMAL SUBUNIT PROTEIN US14M"/>
    <property type="match status" value="1"/>
</dbReference>
<dbReference type="Pfam" id="PF00253">
    <property type="entry name" value="Ribosomal_S14"/>
    <property type="match status" value="1"/>
</dbReference>
<dbReference type="SUPFAM" id="SSF57716">
    <property type="entry name" value="Glucocorticoid receptor-like (DNA-binding domain)"/>
    <property type="match status" value="1"/>
</dbReference>
<dbReference type="PROSITE" id="PS00527">
    <property type="entry name" value="RIBOSOMAL_S14"/>
    <property type="match status" value="1"/>
</dbReference>
<keyword id="KW-0687">Ribonucleoprotein</keyword>
<keyword id="KW-0689">Ribosomal protein</keyword>
<keyword id="KW-0694">RNA-binding</keyword>
<keyword id="KW-0699">rRNA-binding</keyword>
<gene>
    <name evidence="1" type="primary">rpsN</name>
    <name type="ordered locus">A1E_04305</name>
</gene>
<accession>A8EZK3</accession>
<reference key="1">
    <citation type="submission" date="2007-09" db="EMBL/GenBank/DDBJ databases">
        <title>Complete genome sequence of Rickettsia canadensis.</title>
        <authorList>
            <person name="Madan A."/>
            <person name="Fahey J."/>
            <person name="Helton E."/>
            <person name="Ketteman M."/>
            <person name="Madan A."/>
            <person name="Rodrigues S."/>
            <person name="Sanchez A."/>
            <person name="Whiting M."/>
            <person name="Dasch G."/>
            <person name="Eremeeva M."/>
        </authorList>
    </citation>
    <scope>NUCLEOTIDE SEQUENCE [LARGE SCALE GENOMIC DNA]</scope>
    <source>
        <strain>McKiel</strain>
    </source>
</reference>
<proteinExistence type="inferred from homology"/>
<evidence type="ECO:0000255" key="1">
    <source>
        <dbReference type="HAMAP-Rule" id="MF_00537"/>
    </source>
</evidence>
<evidence type="ECO:0000256" key="2">
    <source>
        <dbReference type="SAM" id="MobiDB-lite"/>
    </source>
</evidence>
<evidence type="ECO:0000305" key="3"/>
<feature type="chain" id="PRO_1000128548" description="Small ribosomal subunit protein uS14">
    <location>
        <begin position="1"/>
        <end position="101"/>
    </location>
</feature>
<feature type="region of interest" description="Disordered" evidence="2">
    <location>
        <begin position="1"/>
        <end position="21"/>
    </location>
</feature>
<feature type="compositionally biased region" description="Basic residues" evidence="2">
    <location>
        <begin position="11"/>
        <end position="21"/>
    </location>
</feature>
<sequence length="101" mass="11572">MAKVSLIKKNESRKKKSQSLHNKRVALKSKIYDKNISLEERFSLVMLLAQLPRNSSPTRIRNRCELTGRPRGVTRKFGISRNKLRELIGRGVVPGVVKSSW</sequence>
<name>RS14_RICCK</name>